<reference evidence="13" key="1">
    <citation type="journal article" date="2000" name="Science">
        <title>The genome sequence of Drosophila melanogaster.</title>
        <authorList>
            <person name="Adams M.D."/>
            <person name="Celniker S.E."/>
            <person name="Holt R.A."/>
            <person name="Evans C.A."/>
            <person name="Gocayne J.D."/>
            <person name="Amanatides P.G."/>
            <person name="Scherer S.E."/>
            <person name="Li P.W."/>
            <person name="Hoskins R.A."/>
            <person name="Galle R.F."/>
            <person name="George R.A."/>
            <person name="Lewis S.E."/>
            <person name="Richards S."/>
            <person name="Ashburner M."/>
            <person name="Henderson S.N."/>
            <person name="Sutton G.G."/>
            <person name="Wortman J.R."/>
            <person name="Yandell M.D."/>
            <person name="Zhang Q."/>
            <person name="Chen L.X."/>
            <person name="Brandon R.C."/>
            <person name="Rogers Y.-H.C."/>
            <person name="Blazej R.G."/>
            <person name="Champe M."/>
            <person name="Pfeiffer B.D."/>
            <person name="Wan K.H."/>
            <person name="Doyle C."/>
            <person name="Baxter E.G."/>
            <person name="Helt G."/>
            <person name="Nelson C.R."/>
            <person name="Miklos G.L.G."/>
            <person name="Abril J.F."/>
            <person name="Agbayani A."/>
            <person name="An H.-J."/>
            <person name="Andrews-Pfannkoch C."/>
            <person name="Baldwin D."/>
            <person name="Ballew R.M."/>
            <person name="Basu A."/>
            <person name="Baxendale J."/>
            <person name="Bayraktaroglu L."/>
            <person name="Beasley E.M."/>
            <person name="Beeson K.Y."/>
            <person name="Benos P.V."/>
            <person name="Berman B.P."/>
            <person name="Bhandari D."/>
            <person name="Bolshakov S."/>
            <person name="Borkova D."/>
            <person name="Botchan M.R."/>
            <person name="Bouck J."/>
            <person name="Brokstein P."/>
            <person name="Brottier P."/>
            <person name="Burtis K.C."/>
            <person name="Busam D.A."/>
            <person name="Butler H."/>
            <person name="Cadieu E."/>
            <person name="Center A."/>
            <person name="Chandra I."/>
            <person name="Cherry J.M."/>
            <person name="Cawley S."/>
            <person name="Dahlke C."/>
            <person name="Davenport L.B."/>
            <person name="Davies P."/>
            <person name="de Pablos B."/>
            <person name="Delcher A."/>
            <person name="Deng Z."/>
            <person name="Mays A.D."/>
            <person name="Dew I."/>
            <person name="Dietz S.M."/>
            <person name="Dodson K."/>
            <person name="Doup L.E."/>
            <person name="Downes M."/>
            <person name="Dugan-Rocha S."/>
            <person name="Dunkov B.C."/>
            <person name="Dunn P."/>
            <person name="Durbin K.J."/>
            <person name="Evangelista C.C."/>
            <person name="Ferraz C."/>
            <person name="Ferriera S."/>
            <person name="Fleischmann W."/>
            <person name="Fosler C."/>
            <person name="Gabrielian A.E."/>
            <person name="Garg N.S."/>
            <person name="Gelbart W.M."/>
            <person name="Glasser K."/>
            <person name="Glodek A."/>
            <person name="Gong F."/>
            <person name="Gorrell J.H."/>
            <person name="Gu Z."/>
            <person name="Guan P."/>
            <person name="Harris M."/>
            <person name="Harris N.L."/>
            <person name="Harvey D.A."/>
            <person name="Heiman T.J."/>
            <person name="Hernandez J.R."/>
            <person name="Houck J."/>
            <person name="Hostin D."/>
            <person name="Houston K.A."/>
            <person name="Howland T.J."/>
            <person name="Wei M.-H."/>
            <person name="Ibegwam C."/>
            <person name="Jalali M."/>
            <person name="Kalush F."/>
            <person name="Karpen G.H."/>
            <person name="Ke Z."/>
            <person name="Kennison J.A."/>
            <person name="Ketchum K.A."/>
            <person name="Kimmel B.E."/>
            <person name="Kodira C.D."/>
            <person name="Kraft C.L."/>
            <person name="Kravitz S."/>
            <person name="Kulp D."/>
            <person name="Lai Z."/>
            <person name="Lasko P."/>
            <person name="Lei Y."/>
            <person name="Levitsky A.A."/>
            <person name="Li J.H."/>
            <person name="Li Z."/>
            <person name="Liang Y."/>
            <person name="Lin X."/>
            <person name="Liu X."/>
            <person name="Mattei B."/>
            <person name="McIntosh T.C."/>
            <person name="McLeod M.P."/>
            <person name="McPherson D."/>
            <person name="Merkulov G."/>
            <person name="Milshina N.V."/>
            <person name="Mobarry C."/>
            <person name="Morris J."/>
            <person name="Moshrefi A."/>
            <person name="Mount S.M."/>
            <person name="Moy M."/>
            <person name="Murphy B."/>
            <person name="Murphy L."/>
            <person name="Muzny D.M."/>
            <person name="Nelson D.L."/>
            <person name="Nelson D.R."/>
            <person name="Nelson K.A."/>
            <person name="Nixon K."/>
            <person name="Nusskern D.R."/>
            <person name="Pacleb J.M."/>
            <person name="Palazzolo M."/>
            <person name="Pittman G.S."/>
            <person name="Pan S."/>
            <person name="Pollard J."/>
            <person name="Puri V."/>
            <person name="Reese M.G."/>
            <person name="Reinert K."/>
            <person name="Remington K."/>
            <person name="Saunders R.D.C."/>
            <person name="Scheeler F."/>
            <person name="Shen H."/>
            <person name="Shue B.C."/>
            <person name="Siden-Kiamos I."/>
            <person name="Simpson M."/>
            <person name="Skupski M.P."/>
            <person name="Smith T.J."/>
            <person name="Spier E."/>
            <person name="Spradling A.C."/>
            <person name="Stapleton M."/>
            <person name="Strong R."/>
            <person name="Sun E."/>
            <person name="Svirskas R."/>
            <person name="Tector C."/>
            <person name="Turner R."/>
            <person name="Venter E."/>
            <person name="Wang A.H."/>
            <person name="Wang X."/>
            <person name="Wang Z.-Y."/>
            <person name="Wassarman D.A."/>
            <person name="Weinstock G.M."/>
            <person name="Weissenbach J."/>
            <person name="Williams S.M."/>
            <person name="Woodage T."/>
            <person name="Worley K.C."/>
            <person name="Wu D."/>
            <person name="Yang S."/>
            <person name="Yao Q.A."/>
            <person name="Ye J."/>
            <person name="Yeh R.-F."/>
            <person name="Zaveri J.S."/>
            <person name="Zhan M."/>
            <person name="Zhang G."/>
            <person name="Zhao Q."/>
            <person name="Zheng L."/>
            <person name="Zheng X.H."/>
            <person name="Zhong F.N."/>
            <person name="Zhong W."/>
            <person name="Zhou X."/>
            <person name="Zhu S.C."/>
            <person name="Zhu X."/>
            <person name="Smith H.O."/>
            <person name="Gibbs R.A."/>
            <person name="Myers E.W."/>
            <person name="Rubin G.M."/>
            <person name="Venter J.C."/>
        </authorList>
    </citation>
    <scope>NUCLEOTIDE SEQUENCE [LARGE SCALE GENOMIC DNA]</scope>
    <source>
        <strain evidence="13">Berkeley</strain>
    </source>
</reference>
<reference evidence="13" key="2">
    <citation type="journal article" date="2002" name="Genome Biol.">
        <title>Annotation of the Drosophila melanogaster euchromatic genome: a systematic review.</title>
        <authorList>
            <person name="Misra S."/>
            <person name="Crosby M.A."/>
            <person name="Mungall C.J."/>
            <person name="Matthews B.B."/>
            <person name="Campbell K.S."/>
            <person name="Hradecky P."/>
            <person name="Huang Y."/>
            <person name="Kaminker J.S."/>
            <person name="Millburn G.H."/>
            <person name="Prochnik S.E."/>
            <person name="Smith C.D."/>
            <person name="Tupy J.L."/>
            <person name="Whitfield E.J."/>
            <person name="Bayraktaroglu L."/>
            <person name="Berman B.P."/>
            <person name="Bettencourt B.R."/>
            <person name="Celniker S.E."/>
            <person name="de Grey A.D.N.J."/>
            <person name="Drysdale R.A."/>
            <person name="Harris N.L."/>
            <person name="Richter J."/>
            <person name="Russo S."/>
            <person name="Schroeder A.J."/>
            <person name="Shu S.Q."/>
            <person name="Stapleton M."/>
            <person name="Yamada C."/>
            <person name="Ashburner M."/>
            <person name="Gelbart W.M."/>
            <person name="Rubin G.M."/>
            <person name="Lewis S.E."/>
        </authorList>
    </citation>
    <scope>GENOME REANNOTATION</scope>
    <source>
        <strain evidence="13">Berkeley</strain>
    </source>
</reference>
<reference evidence="11" key="3">
    <citation type="journal article" date="2002" name="Genome Biol.">
        <title>A Drosophila full-length cDNA resource.</title>
        <authorList>
            <person name="Stapleton M."/>
            <person name="Carlson J.W."/>
            <person name="Brokstein P."/>
            <person name="Yu C."/>
            <person name="Champe M."/>
            <person name="George R.A."/>
            <person name="Guarin H."/>
            <person name="Kronmiller B."/>
            <person name="Pacleb J.M."/>
            <person name="Park S."/>
            <person name="Wan K.H."/>
            <person name="Rubin G.M."/>
            <person name="Celniker S.E."/>
        </authorList>
    </citation>
    <scope>NUCLEOTIDE SEQUENCE [LARGE SCALE MRNA]</scope>
    <source>
        <strain evidence="11">Berkeley</strain>
        <tissue evidence="11">Embryo</tissue>
    </source>
</reference>
<reference evidence="10" key="4">
    <citation type="journal article" date="2006" name="Mol. Cell. Biol.">
        <title>The essential gene wda encodes a WD40 repeat subunit of Drosophila SAGA required for histone H3 acetylation.</title>
        <authorList>
            <person name="Guelman S."/>
            <person name="Suganuma T."/>
            <person name="Florens L."/>
            <person name="Weake V."/>
            <person name="Swanson S.K."/>
            <person name="Washburn M.P."/>
            <person name="Abmayr S.M."/>
            <person name="Workman J.L."/>
        </authorList>
    </citation>
    <scope>FUNCTION</scope>
    <scope>IDENTIFICATION IN SAGA COMPLEX</scope>
    <scope>INTERACTION WITH GCN5; SEPT3 AND ADA2B</scope>
    <scope>SUBCELLULAR LOCATION</scope>
    <scope>WD DOMAIN</scope>
    <scope>DISRUPTION PHENOTYPE</scope>
    <scope>IDENTIFICATION BY MASS SPECTROMETRY</scope>
</reference>
<reference evidence="10" key="5">
    <citation type="journal article" date="2009" name="Genes Dev.">
        <title>A novel histone fold domain-containing protein that replaces TAF6 in Drosophila SAGA is required for SAGA-dependent gene expression.</title>
        <authorList>
            <person name="Weake V.M."/>
            <person name="Swanson S.K."/>
            <person name="Mushegian A."/>
            <person name="Florens L."/>
            <person name="Washburn M.P."/>
            <person name="Abmayr S.M."/>
            <person name="Workman J.L."/>
        </authorList>
    </citation>
    <scope>FUNCTION</scope>
    <scope>IDENTIFICATION IN SAGA COMPLEX</scope>
    <scope>SUBCELLULAR LOCATION</scope>
    <scope>IDENTIFICATION BY MASS SPECTROMETRY</scope>
</reference>
<reference evidence="10" key="6">
    <citation type="journal article" date="2011" name="Genes Dev.">
        <title>Post-transcription initiation function of the ubiquitous SAGA complex in tissue-specific gene activation.</title>
        <authorList>
            <person name="Weake V.M."/>
            <person name="Dyer J.O."/>
            <person name="Seidel C."/>
            <person name="Box A."/>
            <person name="Swanson S.K."/>
            <person name="Peak A."/>
            <person name="Florens L."/>
            <person name="Washburn M.P."/>
            <person name="Abmayr S.M."/>
            <person name="Workman J.L."/>
        </authorList>
    </citation>
    <scope>FUNCTION</scope>
    <scope>IDENTIFICATION IN SAGA COMPLEX</scope>
    <scope>DEVELOPMENTAL STAGE</scope>
    <scope>IDENTIFICATION BY MASS SPECTROMETRY</scope>
</reference>
<reference evidence="10" key="7">
    <citation type="journal article" date="2014" name="Genes Dev.">
        <title>Loss of Drosophila Ataxin-7, a SAGA subunit, reduces H2B ubiquitination and leads to neural and retinal degeneration.</title>
        <authorList>
            <person name="Mohan R.D."/>
            <person name="Dialynas G."/>
            <person name="Weake V.M."/>
            <person name="Liu J."/>
            <person name="Martin-Brown S."/>
            <person name="Florens L."/>
            <person name="Washburn M.P."/>
            <person name="Workman J.L."/>
            <person name="Abmayr S.M."/>
        </authorList>
    </citation>
    <scope>FUNCTION</scope>
    <scope>IDENTIFICATION IN THE SAGA COMPLEX</scope>
    <scope>SUBCELLULAR LOCATION</scope>
    <scope>IDENTIFICATION BY MASS SPECTROMETRY</scope>
</reference>
<reference evidence="10" key="8">
    <citation type="journal article" date="2019" name="J. Cell Sci.">
        <title>The Drosophila Dbf4 ortholog Chiffon forms a complex with Gcn5 that is necessary for histone acetylation and viability.</title>
        <authorList>
            <person name="Torres-Zelada E.F."/>
            <person name="Stephenson R.E."/>
            <person name="Alpsoy A."/>
            <person name="Anderson B.D."/>
            <person name="Swanson S.K."/>
            <person name="Florens L."/>
            <person name="Dykhuizen E.C."/>
            <person name="Washburn M.P."/>
            <person name="Weake V.M."/>
        </authorList>
    </citation>
    <scope>FUNCTION</scope>
    <scope>IDENTIFICATION IN THE SAGA COMPLEX</scope>
    <scope>IDENTIFICATION BY MASS SPECTROMETRY</scope>
</reference>
<reference evidence="10" key="9">
    <citation type="journal article" date="2021" name="PLoS Genet.">
        <title>The SAGA core module is critical during Drosophila oogenesis and is broadly recruited to promoters.</title>
        <authorList>
            <person name="Soffers J.H.M."/>
            <person name="Alcantara S.G."/>
            <person name="Li X."/>
            <person name="Shao W."/>
            <person name="Seidel C.W."/>
            <person name="Li H."/>
            <person name="Zeitlinger J."/>
            <person name="Abmayr S.M."/>
            <person name="Workman J.L."/>
        </authorList>
    </citation>
    <scope>FUNCTION</scope>
    <scope>SUBCELLULAR LOCATION</scope>
    <scope>DISRUPTION PHENOTYPE</scope>
</reference>
<dbReference type="EMBL" id="AE014297">
    <property type="protein sequence ID" value="AAF56118.1"/>
    <property type="molecule type" value="Genomic_DNA"/>
</dbReference>
<dbReference type="EMBL" id="AY118904">
    <property type="protein sequence ID" value="AAM50764.1"/>
    <property type="molecule type" value="mRNA"/>
</dbReference>
<dbReference type="RefSeq" id="NP_651136.1">
    <property type="nucleotide sequence ID" value="NM_142879.3"/>
</dbReference>
<dbReference type="SMR" id="Q9VCN9"/>
<dbReference type="ComplexPortal" id="CPX-2644">
    <property type="entry name" value="SAGA complex"/>
</dbReference>
<dbReference type="FunCoup" id="Q9VCN9">
    <property type="interactions" value="461"/>
</dbReference>
<dbReference type="IntAct" id="Q9VCN9">
    <property type="interactions" value="1"/>
</dbReference>
<dbReference type="STRING" id="7227.FBpp0083779"/>
<dbReference type="PaxDb" id="7227-FBpp0083779"/>
<dbReference type="DNASU" id="42750"/>
<dbReference type="EnsemblMetazoa" id="FBtr0084387">
    <property type="protein sequence ID" value="FBpp0083779"/>
    <property type="gene ID" value="FBgn0039067"/>
</dbReference>
<dbReference type="GeneID" id="42750"/>
<dbReference type="KEGG" id="dme:Dmel_CG4448"/>
<dbReference type="UCSC" id="CG4448-RA">
    <property type="organism name" value="d. melanogaster"/>
</dbReference>
<dbReference type="AGR" id="FB:FBgn0039067"/>
<dbReference type="CTD" id="42750"/>
<dbReference type="FlyBase" id="FBgn0039067">
    <property type="gene designation" value="wda"/>
</dbReference>
<dbReference type="VEuPathDB" id="VectorBase:FBgn0039067"/>
<dbReference type="eggNOG" id="KOG4155">
    <property type="taxonomic scope" value="Eukaryota"/>
</dbReference>
<dbReference type="GeneTree" id="ENSGT00940000153342"/>
<dbReference type="HOGENOM" id="CLU_005884_1_1_1"/>
<dbReference type="OMA" id="IYRSHNY"/>
<dbReference type="OrthoDB" id="10266330at2759"/>
<dbReference type="Reactome" id="R-DME-674695">
    <property type="pathway name" value="RNA Polymerase II Pre-transcription Events"/>
</dbReference>
<dbReference type="Reactome" id="R-DME-6804756">
    <property type="pathway name" value="Regulation of TP53 Activity through Phosphorylation"/>
</dbReference>
<dbReference type="Reactome" id="R-DME-6807505">
    <property type="pathway name" value="RNA polymerase II transcribes snRNA genes"/>
</dbReference>
<dbReference type="Reactome" id="R-DME-73776">
    <property type="pathway name" value="RNA Polymerase II Promoter Escape"/>
</dbReference>
<dbReference type="Reactome" id="R-DME-73779">
    <property type="pathway name" value="RNA Polymerase II Transcription Pre-Initiation And Promoter Opening"/>
</dbReference>
<dbReference type="Reactome" id="R-DME-75953">
    <property type="pathway name" value="RNA Polymerase II Transcription Initiation"/>
</dbReference>
<dbReference type="Reactome" id="R-DME-76042">
    <property type="pathway name" value="RNA Polymerase II Transcription Initiation And Promoter Clearance"/>
</dbReference>
<dbReference type="Reactome" id="R-DME-9907900">
    <property type="pathway name" value="Proteasome assembly"/>
</dbReference>
<dbReference type="BioGRID-ORCS" id="42750">
    <property type="hits" value="1 hit in 1 CRISPR screen"/>
</dbReference>
<dbReference type="Proteomes" id="UP000000803">
    <property type="component" value="Chromosome 3R"/>
</dbReference>
<dbReference type="Bgee" id="FBgn0039067">
    <property type="expression patterns" value="Expressed in T neuron T4d (Drosophila) in embryonic/larval optic lobe (Drosophila) and 38 other cell types or tissues"/>
</dbReference>
<dbReference type="GO" id="GO:0005634">
    <property type="term" value="C:nucleus"/>
    <property type="evidence" value="ECO:0000314"/>
    <property type="project" value="FlyBase"/>
</dbReference>
<dbReference type="GO" id="GO:0000124">
    <property type="term" value="C:SAGA complex"/>
    <property type="evidence" value="ECO:0000314"/>
    <property type="project" value="FlyBase"/>
</dbReference>
<dbReference type="GO" id="GO:0045944">
    <property type="term" value="P:positive regulation of transcription by RNA polymerase II"/>
    <property type="evidence" value="ECO:0000315"/>
    <property type="project" value="FlyBase"/>
</dbReference>
<dbReference type="CDD" id="cd00200">
    <property type="entry name" value="WD40"/>
    <property type="match status" value="1"/>
</dbReference>
<dbReference type="FunFam" id="2.130.10.10:FF:002602">
    <property type="entry name" value="LD16387p"/>
    <property type="match status" value="1"/>
</dbReference>
<dbReference type="Gene3D" id="1.25.40.500">
    <property type="entry name" value="TFIID subunit TAF5, NTD2 domain"/>
    <property type="match status" value="1"/>
</dbReference>
<dbReference type="Gene3D" id="2.130.10.10">
    <property type="entry name" value="YVTN repeat-like/Quinoprotein amine dehydrogenase"/>
    <property type="match status" value="2"/>
</dbReference>
<dbReference type="InterPro" id="IPR055442">
    <property type="entry name" value="Beta-prop_EML-like_2nd"/>
</dbReference>
<dbReference type="InterPro" id="IPR020472">
    <property type="entry name" value="G-protein_beta_WD-40_rep"/>
</dbReference>
<dbReference type="InterPro" id="IPR037264">
    <property type="entry name" value="TFIID_NTD2_sf"/>
</dbReference>
<dbReference type="InterPro" id="IPR015943">
    <property type="entry name" value="WD40/YVTN_repeat-like_dom_sf"/>
</dbReference>
<dbReference type="InterPro" id="IPR019775">
    <property type="entry name" value="WD40_repeat_CS"/>
</dbReference>
<dbReference type="InterPro" id="IPR036322">
    <property type="entry name" value="WD40_repeat_dom_sf"/>
</dbReference>
<dbReference type="InterPro" id="IPR001680">
    <property type="entry name" value="WD40_rpt"/>
</dbReference>
<dbReference type="PANTHER" id="PTHR19879">
    <property type="entry name" value="TRANSCRIPTION INITIATION FACTOR TFIID"/>
    <property type="match status" value="1"/>
</dbReference>
<dbReference type="PANTHER" id="PTHR19879:SF5">
    <property type="entry name" value="WD REPEAT-CONTAINING PROTEIN 55 HOMOLOG"/>
    <property type="match status" value="1"/>
</dbReference>
<dbReference type="Pfam" id="PF23414">
    <property type="entry name" value="Beta-prop_EML_2"/>
    <property type="match status" value="1"/>
</dbReference>
<dbReference type="Pfam" id="PF00400">
    <property type="entry name" value="WD40"/>
    <property type="match status" value="1"/>
</dbReference>
<dbReference type="PRINTS" id="PR00320">
    <property type="entry name" value="GPROTEINBRPT"/>
</dbReference>
<dbReference type="SMART" id="SM00320">
    <property type="entry name" value="WD40"/>
    <property type="match status" value="6"/>
</dbReference>
<dbReference type="SUPFAM" id="SSF160897">
    <property type="entry name" value="Taf5 N-terminal domain-like"/>
    <property type="match status" value="1"/>
</dbReference>
<dbReference type="SUPFAM" id="SSF50978">
    <property type="entry name" value="WD40 repeat-like"/>
    <property type="match status" value="1"/>
</dbReference>
<dbReference type="PROSITE" id="PS00678">
    <property type="entry name" value="WD_REPEATS_1"/>
    <property type="match status" value="1"/>
</dbReference>
<dbReference type="PROSITE" id="PS50082">
    <property type="entry name" value="WD_REPEATS_2"/>
    <property type="match status" value="5"/>
</dbReference>
<dbReference type="PROSITE" id="PS50294">
    <property type="entry name" value="WD_REPEATS_REGION"/>
    <property type="match status" value="4"/>
</dbReference>
<feature type="chain" id="PRO_0000462582" description="Protein will decrease acetylation">
    <location>
        <begin position="1"/>
        <end position="743"/>
    </location>
</feature>
<feature type="repeat" description="WD 1" evidence="1">
    <location>
        <begin position="389"/>
        <end position="428"/>
    </location>
</feature>
<feature type="repeat" description="WD 2" evidence="2">
    <location>
        <begin position="493"/>
        <end position="524"/>
    </location>
</feature>
<feature type="repeat" description="WD 3" evidence="2">
    <location>
        <begin position="535"/>
        <end position="576"/>
    </location>
</feature>
<feature type="repeat" description="WD 4" evidence="2">
    <location>
        <begin position="577"/>
        <end position="618"/>
    </location>
</feature>
<feature type="repeat" description="WD 5" evidence="2">
    <location>
        <begin position="619"/>
        <end position="660"/>
    </location>
</feature>
<feature type="repeat" description="WD 6" evidence="2">
    <location>
        <begin position="661"/>
        <end position="702"/>
    </location>
</feature>
<accession>Q9VCN9</accession>
<organism evidence="13">
    <name type="scientific">Drosophila melanogaster</name>
    <name type="common">Fruit fly</name>
    <dbReference type="NCBI Taxonomy" id="7227"/>
    <lineage>
        <taxon>Eukaryota</taxon>
        <taxon>Metazoa</taxon>
        <taxon>Ecdysozoa</taxon>
        <taxon>Arthropoda</taxon>
        <taxon>Hexapoda</taxon>
        <taxon>Insecta</taxon>
        <taxon>Pterygota</taxon>
        <taxon>Neoptera</taxon>
        <taxon>Endopterygota</taxon>
        <taxon>Diptera</taxon>
        <taxon>Brachycera</taxon>
        <taxon>Muscomorpha</taxon>
        <taxon>Ephydroidea</taxon>
        <taxon>Drosophilidae</taxon>
        <taxon>Drosophila</taxon>
        <taxon>Sophophora</taxon>
    </lineage>
</organism>
<proteinExistence type="evidence at protein level"/>
<evidence type="ECO:0000255" key="1"/>
<evidence type="ECO:0000255" key="2">
    <source>
        <dbReference type="PROSITE-ProRule" id="PRU00221"/>
    </source>
</evidence>
<evidence type="ECO:0000269" key="3">
    <source>
    </source>
</evidence>
<evidence type="ECO:0000269" key="4">
    <source>
    </source>
</evidence>
<evidence type="ECO:0000269" key="5">
    <source>
    </source>
</evidence>
<evidence type="ECO:0000269" key="6">
    <source>
    </source>
</evidence>
<evidence type="ECO:0000269" key="7">
    <source>
    </source>
</evidence>
<evidence type="ECO:0000269" key="8">
    <source>
    </source>
</evidence>
<evidence type="ECO:0000303" key="9">
    <source>
    </source>
</evidence>
<evidence type="ECO:0000305" key="10"/>
<evidence type="ECO:0000312" key="11">
    <source>
        <dbReference type="EMBL" id="AAM50764.1"/>
    </source>
</evidence>
<evidence type="ECO:0000312" key="12">
    <source>
        <dbReference type="FlyBase" id="FBgn0039067"/>
    </source>
</evidence>
<evidence type="ECO:0000312" key="13">
    <source>
        <dbReference type="Proteomes" id="UP000000803"/>
    </source>
</evidence>
<protein>
    <recommendedName>
        <fullName evidence="9 12">Protein will decrease acetylation</fullName>
    </recommendedName>
</protein>
<comment type="function">
    <text evidence="3 4 5 6 7 8">Component of the transcription regulatory complex SAGA, a multiprotein complex that activates transcription by remodeling chromatin and mediating histone acetylation and deubiquitination (PubMed:16980620, PubMed:20008933, PubMed:21764853, PubMed:24493646, PubMed:30559249). The SAGA complex predominantly acetylates histone H3 (PubMed:30559249). Involved in acetylation of histone H3 on 'Lys-10' (H3K9ac) by the SAGA complex in the larval central nervous system (PubMed:16980620, PubMed:20008933). Involved in SAGA complex coactivator functions (PubMed:20008933, PubMed:34807910). Required for oogenesis (PubMed:34807910).</text>
</comment>
<comment type="subunit">
    <text evidence="3 4 5 6 7">Component of the Spt-Ada-Gcn5 acetyltransferase (SAGA) complex consisting of wda/Taf5L, Saf6, Taf9, Taf10b, Taf12, Ada1, Spt3, Spt7, Spt20, Sf3b3, Sf3b5, Nipped-A/Tra1, a histone acetyltransferase (HAT) module made up of Gcn5, Ada2b (Isoform B), Ada3 and Sgf29, and a deubiquitinase (DUB) module made up of not/nonstop, Sgf11 and e(y)2 tethered to SAGA by Atxn7 (PubMed:16980620, PubMed:20008933, PubMed:21764853, PubMed:24493646, PubMed:30559249). Not essential for the assembly or integrity of the SAGA complex (PubMed:16980620). Not a component of the Ada2a-containing ATAC complex (PubMed:16980620).</text>
</comment>
<comment type="subcellular location">
    <subcellularLocation>
        <location evidence="3 4 6">Nucleus</location>
    </subcellularLocation>
    <subcellularLocation>
        <location evidence="8">Chromosome</location>
    </subcellularLocation>
    <text evidence="8">As part of the SAGA complex associates with chromosomes near transcriptional start sites, matching the distribution of RNA polymerase II.</text>
</comment>
<comment type="developmental stage">
    <text evidence="5">Expressed in embryonic muscle and neuronal cells (at protein level).</text>
</comment>
<comment type="domain">
    <text evidence="3">The C-terminus containing the 6 WD repeats is required for association with other components of the SAGA complex.</text>
</comment>
<comment type="disruption phenotype">
    <text evidence="3 8">Larval lethal in 2nd instar stage (PubMed:16980620). RNAi-mediated knockdown in female germ line cells results in arrested oogenesis at stage 6-7 (PubMed:34807910).</text>
</comment>
<comment type="similarity">
    <text evidence="10">Belongs to the WD repeat TAF5 family.</text>
</comment>
<sequence length="743" mass="83728">MSLPSASNHAHAASPVYSNSNNNKSSASSKKTSSKNDLLRCAVGLLLKQKNYVSNERFRRSDFLLLQNKQQFAVNKMLDTDLHGGNSFTFSNVQVITNNQHTVDQQFGRFSQFVEAQAEPLRLEMKRFYGPMLCHFYLDLLKAREPRGAVELLRKYAHLVAPVDMYDAPPPTKINGCSTTANESTFNIRFAKEAQDTGDTELDYFMRLVQTLSGYTRLEAAESDDTVAHFRSSKYELHTTAVVVNRICAYLQRRGHVLIMNLLYTWLHVHIVENEQRAFSEDHLLGLTDDLEGEDGEDDVVSKPAVTLNTRGDIRPSKSLTEKSNRKRPAEEPNIMLETDIKQEVETDESAELSKLQLNIDACLDTLKSATEQILKSQVELPRFLRISERSRGLTSAHLDPSECHMLAGFDNSAVQLWQLNQSYCRGKSFYRRYPQKRCPWELNNCANQEEETDEDSSDEDVKCSEEERRERNRARHCKYADNSYNEYGGFQLRGHTKGVTDVRFSAHYPLMYSVSKDATMRCWRAHNLHCAAIYRSHNYPIWCLDESPVGQYVVTGSKDLSARLWSLEKEHALIIYAGHTQDVECVAFHPNGNYIATGSADHSVRLWCATSGKLMRVFADCRQAVTQLAFSPDGKMLAAAGEETKVRIFDLAAGAQLAELKDHSASISSLSWSTHNRHLATACSDGTLRLWDIKKLSPMSDNSSAGSSSSATTNRVLTVNSSCQRLVDVFYGTSKTLYCIGT</sequence>
<gene>
    <name evidence="9 12" type="primary">wda</name>
    <name evidence="12" type="ORF">CG4448</name>
</gene>
<name>TAF5L_DROME</name>
<keyword id="KW-0158">Chromosome</keyword>
<keyword id="KW-0539">Nucleus</keyword>
<keyword id="KW-1185">Reference proteome</keyword>
<keyword id="KW-0677">Repeat</keyword>
<keyword id="KW-0804">Transcription</keyword>
<keyword id="KW-0805">Transcription regulation</keyword>
<keyword id="KW-0853">WD repeat</keyword>